<keyword id="KW-0597">Phosphoprotein</keyword>
<keyword id="KW-0653">Protein transport</keyword>
<keyword id="KW-1185">Reference proteome</keyword>
<keyword id="KW-0813">Transport</keyword>
<dbReference type="EMBL" id="BC082011">
    <property type="protein sequence ID" value="AAH82011.1"/>
    <property type="molecule type" value="mRNA"/>
</dbReference>
<dbReference type="RefSeq" id="NP_001005538.2">
    <property type="nucleotide sequence ID" value="NM_001005538.2"/>
</dbReference>
<dbReference type="RefSeq" id="XP_006229994.1">
    <property type="nucleotide sequence ID" value="XM_006229932.5"/>
</dbReference>
<dbReference type="SMR" id="Q66H54"/>
<dbReference type="FunCoup" id="Q66H54">
    <property type="interactions" value="2508"/>
</dbReference>
<dbReference type="STRING" id="10116.ENSRNOP00000023502"/>
<dbReference type="GlyGen" id="Q66H54">
    <property type="glycosylation" value="3 sites"/>
</dbReference>
<dbReference type="iPTMnet" id="Q66H54"/>
<dbReference type="PhosphoSitePlus" id="Q66H54"/>
<dbReference type="GeneID" id="293343"/>
<dbReference type="KEGG" id="rno:293343"/>
<dbReference type="UCSC" id="RGD:1359585">
    <property type="organism name" value="rat"/>
</dbReference>
<dbReference type="AGR" id="RGD:1359585"/>
<dbReference type="CTD" id="84067"/>
<dbReference type="RGD" id="1359585">
    <property type="gene designation" value="Fhip1b"/>
</dbReference>
<dbReference type="VEuPathDB" id="HostDB:ENSRNOG00000017408"/>
<dbReference type="eggNOG" id="KOG3695">
    <property type="taxonomic scope" value="Eukaryota"/>
</dbReference>
<dbReference type="HOGENOM" id="CLU_007807_1_0_1"/>
<dbReference type="InParanoid" id="Q66H54"/>
<dbReference type="OrthoDB" id="6287422at2759"/>
<dbReference type="PRO" id="PR:Q66H54"/>
<dbReference type="Proteomes" id="UP000002494">
    <property type="component" value="Chromosome 1"/>
</dbReference>
<dbReference type="Bgee" id="ENSRNOG00000017408">
    <property type="expression patterns" value="Expressed in testis and 19 other cell types or tissues"/>
</dbReference>
<dbReference type="GO" id="GO:0070695">
    <property type="term" value="C:FHF complex"/>
    <property type="evidence" value="ECO:0000250"/>
    <property type="project" value="UniProtKB"/>
</dbReference>
<dbReference type="GO" id="GO:0045022">
    <property type="term" value="P:early endosome to late endosome transport"/>
    <property type="evidence" value="ECO:0000250"/>
    <property type="project" value="UniProtKB"/>
</dbReference>
<dbReference type="GO" id="GO:0007032">
    <property type="term" value="P:endosome organization"/>
    <property type="evidence" value="ECO:0000250"/>
    <property type="project" value="UniProtKB"/>
</dbReference>
<dbReference type="GO" id="GO:0008333">
    <property type="term" value="P:endosome to lysosome transport"/>
    <property type="evidence" value="ECO:0000250"/>
    <property type="project" value="UniProtKB"/>
</dbReference>
<dbReference type="GO" id="GO:0007040">
    <property type="term" value="P:lysosome organization"/>
    <property type="evidence" value="ECO:0000250"/>
    <property type="project" value="UniProtKB"/>
</dbReference>
<dbReference type="GO" id="GO:1905719">
    <property type="term" value="P:protein localization to perinuclear region of cytoplasm"/>
    <property type="evidence" value="ECO:0000250"/>
    <property type="project" value="UniProtKB"/>
</dbReference>
<dbReference type="GO" id="GO:0015031">
    <property type="term" value="P:protein transport"/>
    <property type="evidence" value="ECO:0007669"/>
    <property type="project" value="UniProtKB-KW"/>
</dbReference>
<dbReference type="InterPro" id="IPR019384">
    <property type="entry name" value="FHIP"/>
</dbReference>
<dbReference type="InterPro" id="IPR045669">
    <property type="entry name" value="FHIP_C"/>
</dbReference>
<dbReference type="InterPro" id="IPR045668">
    <property type="entry name" value="FHIP_KELAA_motif"/>
</dbReference>
<dbReference type="PANTHER" id="PTHR21705:SF4">
    <property type="entry name" value="FHF COMPLEX SUBUNIT HOOK-INTERACTING PROTEIN 1B"/>
    <property type="match status" value="1"/>
</dbReference>
<dbReference type="PANTHER" id="PTHR21705">
    <property type="entry name" value="RAI16 PROTEIN-RELATED"/>
    <property type="match status" value="1"/>
</dbReference>
<dbReference type="Pfam" id="PF19314">
    <property type="entry name" value="DUF5917"/>
    <property type="match status" value="1"/>
</dbReference>
<dbReference type="Pfam" id="PF19311">
    <property type="entry name" value="KELAA"/>
    <property type="match status" value="1"/>
</dbReference>
<dbReference type="Pfam" id="PF10257">
    <property type="entry name" value="RAI16-like"/>
    <property type="match status" value="1"/>
</dbReference>
<gene>
    <name type="primary">Fhip1b</name>
    <name type="synonym">Fam160a2</name>
</gene>
<sequence>MEKMNWLSRLASRVPGHRVPQGASLQTPVMADPETCLMVFKNHWSQVVRILERQGSRAAAGGADDLSAVRNHTYQMLTLLAEDRAVPSAPSGPGPLLEFALREDLLSRVLTWQLQWDEFGDGVEERRAEQLKLFEMLVSEARQPLLRHGPVREALLALLDACGRPVPSSPALDEGLVLLLSQLCVCVAREPSLLEFFLQPPPEPGAAPRLLLFSRLVPFVHREGTLGQQARDALLLLMALSDGSPTVGRYIADHSYFCPVLATGLSALYSSLPRKIEVPGDDWHCLRREDWIGVPALALFMSSLEFCNAVIQVAHPLVQKQLVDYIHNGFLVPVMGPALHKTSVEEMIASTAYLELFLRSISEPALLRTFLRFLLLHRHDTHTILDTLVARIGSNSRLCMVSLSLFRTLLNLSCEDVLLQLVLRYLVPCNHVMLSQKPAVRDVDLYGRAADKFLSLIPRCCRHHAPSPPRPEHASWARGGPSREPGRREDITGPGSPSVDSSSVVTVPRPSTPSRLALFLRQQSLGGSESPGPAPRSPGLTASPTSSPGRRPSPAEEPGPFMAVLFAKLENMLQNSVYVNFLLTGLVAQLACHPQPLLRSFLLNTNMVFQPSVKSLLQVLGSVKNKIESFAASQEDFPALLSKAKKYLIARGKLDWAEGPTAGPTPRRSDSLVRSRRPSLGELLLRHAHSPTRARQAVQVLQPGRDGTGLGLGGGSPGASTPVLLPRGGASERQGEALRVKNAVYCAVIFPEFLKELAAISQAHAVTSPFLLDTSEEVSVPPISGFGPLNP</sequence>
<organism>
    <name type="scientific">Rattus norvegicus</name>
    <name type="common">Rat</name>
    <dbReference type="NCBI Taxonomy" id="10116"/>
    <lineage>
        <taxon>Eukaryota</taxon>
        <taxon>Metazoa</taxon>
        <taxon>Chordata</taxon>
        <taxon>Craniata</taxon>
        <taxon>Vertebrata</taxon>
        <taxon>Euteleostomi</taxon>
        <taxon>Mammalia</taxon>
        <taxon>Eutheria</taxon>
        <taxon>Euarchontoglires</taxon>
        <taxon>Glires</taxon>
        <taxon>Rodentia</taxon>
        <taxon>Myomorpha</taxon>
        <taxon>Muroidea</taxon>
        <taxon>Muridae</taxon>
        <taxon>Murinae</taxon>
        <taxon>Rattus</taxon>
    </lineage>
</organism>
<name>FHI1B_RAT</name>
<comment type="function">
    <text evidence="2">Component of the FTS/Hook/FHIP complex (FHF complex). The FHF complex may function to promote vesicle trafficking and/or fusion via the homotypic vesicular protein sorting complex (the HOPS complex). FHF complex promotes the distribution of AP-4 complex to the perinuclear area of the cell.</text>
</comment>
<comment type="subunit">
    <text evidence="2">Component of the FTS/Hook/FHIP complex (FHF complex), composed of AKTIP/FTS, FHIP1B, and one or more members of the Hook family of proteins HOOK1, HOOK2, and HOOK3. The FHF complex associates with the homotypic vesicular sorting complex (the HOPS complex).</text>
</comment>
<comment type="similarity">
    <text evidence="4">Belongs to the FHIP family.</text>
</comment>
<protein>
    <recommendedName>
        <fullName>FHF complex subunit HOOK-interacting protein 1B</fullName>
        <shortName>FHIP1B</shortName>
    </recommendedName>
    <alternativeName>
        <fullName>FTS- and Hook-interacting protein</fullName>
        <shortName>FHIP</shortName>
    </alternativeName>
</protein>
<accession>Q66H54</accession>
<feature type="chain" id="PRO_0000253862" description="FHF complex subunit HOOK-interacting protein 1B">
    <location>
        <begin position="1"/>
        <end position="791"/>
    </location>
</feature>
<feature type="region of interest" description="Disordered" evidence="3">
    <location>
        <begin position="465"/>
        <end position="510"/>
    </location>
</feature>
<feature type="region of interest" description="Disordered" evidence="3">
    <location>
        <begin position="524"/>
        <end position="556"/>
    </location>
</feature>
<feature type="compositionally biased region" description="Low complexity" evidence="3">
    <location>
        <begin position="496"/>
        <end position="510"/>
    </location>
</feature>
<feature type="compositionally biased region" description="Low complexity" evidence="3">
    <location>
        <begin position="541"/>
        <end position="552"/>
    </location>
</feature>
<feature type="modified residue" description="Phosphoserine" evidence="2">
    <location>
        <position position="467"/>
    </location>
</feature>
<feature type="modified residue" description="Phosphoserine" evidence="1">
    <location>
        <position position="524"/>
    </location>
</feature>
<feature type="modified residue" description="Phosphoserine" evidence="1">
    <location>
        <position position="537"/>
    </location>
</feature>
<feature type="modified residue" description="Phosphoserine" evidence="5">
    <location>
        <position position="543"/>
    </location>
</feature>
<feature type="modified residue" description="Phosphoserine" evidence="5">
    <location>
        <position position="547"/>
    </location>
</feature>
<feature type="modified residue" description="Phosphoserine" evidence="2">
    <location>
        <position position="679"/>
    </location>
</feature>
<feature type="modified residue" description="Phosphothreonine" evidence="5">
    <location>
        <position position="708"/>
    </location>
</feature>
<feature type="modified residue" description="Phosphoserine" evidence="5">
    <location>
        <position position="716"/>
    </location>
</feature>
<reference key="1">
    <citation type="journal article" date="2004" name="Genome Res.">
        <title>The status, quality, and expansion of the NIH full-length cDNA project: the Mammalian Gene Collection (MGC).</title>
        <authorList>
            <consortium name="The MGC Project Team"/>
        </authorList>
    </citation>
    <scope>NUCLEOTIDE SEQUENCE [LARGE SCALE MRNA]</scope>
    <source>
        <tissue>Testis</tissue>
    </source>
</reference>
<reference key="2">
    <citation type="journal article" date="2012" name="Nat. Commun.">
        <title>Quantitative maps of protein phosphorylation sites across 14 different rat organs and tissues.</title>
        <authorList>
            <person name="Lundby A."/>
            <person name="Secher A."/>
            <person name="Lage K."/>
            <person name="Nordsborg N.B."/>
            <person name="Dmytriyev A."/>
            <person name="Lundby C."/>
            <person name="Olsen J.V."/>
        </authorList>
    </citation>
    <scope>PHOSPHORYLATION [LARGE SCALE ANALYSIS] AT SER-543; SER-547; THR-708 AND SER-716</scope>
    <scope>IDENTIFICATION BY MASS SPECTROMETRY [LARGE SCALE ANALYSIS]</scope>
</reference>
<proteinExistence type="evidence at protein level"/>
<evidence type="ECO:0000250" key="1">
    <source>
        <dbReference type="UniProtKB" id="Q3U2I3"/>
    </source>
</evidence>
<evidence type="ECO:0000250" key="2">
    <source>
        <dbReference type="UniProtKB" id="Q8N612"/>
    </source>
</evidence>
<evidence type="ECO:0000256" key="3">
    <source>
        <dbReference type="SAM" id="MobiDB-lite"/>
    </source>
</evidence>
<evidence type="ECO:0000305" key="4"/>
<evidence type="ECO:0007744" key="5">
    <source>
    </source>
</evidence>